<gene>
    <name evidence="3" type="primary">srdC</name>
    <name evidence="7" type="ORF">SAMD00020551_1551</name>
</gene>
<accession>A0A0A8X338</accession>
<accession>E9RFD0</accession>
<keyword id="KW-1003">Cell membrane</keyword>
<keyword id="KW-0472">Membrane</keyword>
<keyword id="KW-0560">Oxidoreductase</keyword>
<keyword id="KW-1185">Reference proteome</keyword>
<keyword id="KW-0812">Transmembrane</keyword>
<keyword id="KW-1133">Transmembrane helix</keyword>
<protein>
    <recommendedName>
        <fullName evidence="4">Selenate reductase subunit C</fullName>
        <ecNumber evidence="5">1.97.1.14</ecNumber>
    </recommendedName>
    <alternativeName>
        <fullName evidence="4">Selenate reductase membrane anchor subunit</fullName>
    </alternativeName>
</protein>
<evidence type="ECO:0000255" key="1"/>
<evidence type="ECO:0000269" key="2">
    <source>
    </source>
</evidence>
<evidence type="ECO:0000303" key="3">
    <source>
    </source>
</evidence>
<evidence type="ECO:0000305" key="4"/>
<evidence type="ECO:0000305" key="5">
    <source>
    </source>
</evidence>
<evidence type="ECO:0000312" key="6">
    <source>
        <dbReference type="EMBL" id="BAJ83593.1"/>
    </source>
</evidence>
<evidence type="ECO:0000312" key="7">
    <source>
        <dbReference type="EMBL" id="GAM13407.1"/>
    </source>
</evidence>
<sequence length="426" mass="48229">MLKKLYFTVLSFIAIVGVISLYIRLSEGMKMSALTSYSSWGLWIVFYIYFIGLSAGSFLLSTMVYVFNMKQFERIGKLALFTAFFSLMAGLLFVLIDLGHPERFWHTLVYRQPNSILSWEIQFYLIYMLLIVAEIWFLMREEFAQRAQSTKGLTKLFNRTLTLGYKVPNSQQKLEFHREQSHKWMKILGIAGIPTAVGVHGGTGSLFGVVMAKEYWFSGLTPIIFLVSALVSGAALMLFLYSFFGGAKKNGDSLLKELGTLLTLFIGIDLLLMIAEFLIGLYNPIHHERMTFNEILFGDRWFIFWIGQIGMVIILPILLITISKGKRLLMGLAGLSVVLGIVCVRWILVIPAYVAPHFDGLDSAYNSSRLLYEYSPNLLEWSSSVGLIGIVILLFSITVQLVPVFNKQKEVHQTHGKPTPEIHIKA</sequence>
<dbReference type="EC" id="1.97.1.14" evidence="5"/>
<dbReference type="EMBL" id="AB534554">
    <property type="protein sequence ID" value="BAJ83593.1"/>
    <property type="molecule type" value="Genomic_DNA"/>
</dbReference>
<dbReference type="EMBL" id="BASE01000031">
    <property type="protein sequence ID" value="GAM13407.1"/>
    <property type="molecule type" value="Genomic_DNA"/>
</dbReference>
<dbReference type="STRING" id="1321606.SAMD00020551_1551"/>
<dbReference type="KEGG" id="ag:BAJ83593"/>
<dbReference type="OrthoDB" id="9768158at2"/>
<dbReference type="BRENDA" id="1.97.1.9">
    <property type="organism ID" value="13649"/>
</dbReference>
<dbReference type="Proteomes" id="UP000031014">
    <property type="component" value="Unassembled WGS sequence"/>
</dbReference>
<dbReference type="GO" id="GO:0005886">
    <property type="term" value="C:plasma membrane"/>
    <property type="evidence" value="ECO:0007669"/>
    <property type="project" value="UniProtKB-SubCell"/>
</dbReference>
<dbReference type="GO" id="GO:0016491">
    <property type="term" value="F:oxidoreductase activity"/>
    <property type="evidence" value="ECO:0007669"/>
    <property type="project" value="UniProtKB-KW"/>
</dbReference>
<dbReference type="Gene3D" id="1.20.1630.10">
    <property type="entry name" value="Formate dehydrogenase/DMSO reductase domain"/>
    <property type="match status" value="1"/>
</dbReference>
<dbReference type="InterPro" id="IPR052049">
    <property type="entry name" value="Electron_transfer_protein"/>
</dbReference>
<dbReference type="InterPro" id="IPR005614">
    <property type="entry name" value="NrfD-like"/>
</dbReference>
<dbReference type="PANTHER" id="PTHR34856">
    <property type="entry name" value="PROTEIN NRFD"/>
    <property type="match status" value="1"/>
</dbReference>
<dbReference type="PANTHER" id="PTHR34856:SF2">
    <property type="entry name" value="PROTEIN NRFD"/>
    <property type="match status" value="1"/>
</dbReference>
<dbReference type="Pfam" id="PF03916">
    <property type="entry name" value="NrfD"/>
    <property type="match status" value="1"/>
</dbReference>
<name>SRDC_MESS1</name>
<organism>
    <name type="scientific">Mesobacillus selenatarsenatis (strain DSM 18680 / JCM 14380 / FERM P-15431 / SF-1)</name>
    <dbReference type="NCBI Taxonomy" id="1321606"/>
    <lineage>
        <taxon>Bacteria</taxon>
        <taxon>Bacillati</taxon>
        <taxon>Bacillota</taxon>
        <taxon>Bacilli</taxon>
        <taxon>Bacillales</taxon>
        <taxon>Bacillaceae</taxon>
        <taxon>Mesobacillus</taxon>
    </lineage>
</organism>
<proteinExistence type="evidence at protein level"/>
<comment type="function">
    <text evidence="2 5">Component of the respiratory selenate reductase complex, which catalyzes the reduction of selenate to selenite (PubMed:21357486). This subunit probably receives electrons directly from the membrane quinone pool and transfers the electrons to the iron-sulfur clusters of SrdB (Probable). May be the membrane anchor protein subunit of the complex (Probable).</text>
</comment>
<comment type="catalytic activity">
    <reaction evidence="5">
        <text>selenite + a quinone + H2O = selenate + a quinol</text>
        <dbReference type="Rhea" id="RHEA:51636"/>
        <dbReference type="ChEBI" id="CHEBI:15075"/>
        <dbReference type="ChEBI" id="CHEBI:15377"/>
        <dbReference type="ChEBI" id="CHEBI:18212"/>
        <dbReference type="ChEBI" id="CHEBI:24646"/>
        <dbReference type="ChEBI" id="CHEBI:132124"/>
        <dbReference type="EC" id="1.97.1.14"/>
    </reaction>
</comment>
<comment type="subunit">
    <text evidence="2">The complex is composed of three subunits: SrdA, SrdB and SrdC.</text>
</comment>
<comment type="subcellular location">
    <subcellularLocation>
        <location evidence="5">Cell membrane</location>
        <topology evidence="1">Multi-pass membrane protein</topology>
    </subcellularLocation>
    <text evidence="5">SrdA, SrdB and SrdC probably form a membrane-bound complex facing the extracytoplasmic side of the cell.</text>
</comment>
<comment type="similarity">
    <text evidence="4">Belongs to the NrfD family.</text>
</comment>
<feature type="chain" id="PRO_0000461866" description="Selenate reductase subunit C">
    <location>
        <begin position="1"/>
        <end position="426"/>
    </location>
</feature>
<feature type="transmembrane region" description="Helical" evidence="1">
    <location>
        <begin position="5"/>
        <end position="25"/>
    </location>
</feature>
<feature type="transmembrane region" description="Helical" evidence="1">
    <location>
        <begin position="40"/>
        <end position="60"/>
    </location>
</feature>
<feature type="transmembrane region" description="Helical" evidence="1">
    <location>
        <begin position="78"/>
        <end position="98"/>
    </location>
</feature>
<feature type="transmembrane region" description="Helical" evidence="1">
    <location>
        <begin position="119"/>
        <end position="139"/>
    </location>
</feature>
<feature type="transmembrane region" description="Helical" evidence="1">
    <location>
        <begin position="187"/>
        <end position="207"/>
    </location>
</feature>
<feature type="transmembrane region" description="Helical" evidence="1">
    <location>
        <begin position="223"/>
        <end position="243"/>
    </location>
</feature>
<feature type="transmembrane region" description="Helical" evidence="1">
    <location>
        <begin position="261"/>
        <end position="281"/>
    </location>
</feature>
<feature type="transmembrane region" description="Helical" evidence="1">
    <location>
        <begin position="302"/>
        <end position="322"/>
    </location>
</feature>
<feature type="transmembrane region" description="Helical" evidence="1">
    <location>
        <begin position="330"/>
        <end position="350"/>
    </location>
</feature>
<feature type="transmembrane region" description="Helical" evidence="1">
    <location>
        <begin position="385"/>
        <end position="405"/>
    </location>
</feature>
<reference evidence="6" key="1">
    <citation type="journal article" date="2011" name="J. Bacteriol.">
        <title>Molecular cloning and characterization of the srdBCA operon, encoding the respiratory selenate reductase complex, from the selenate-reducing bacterium Bacillus selenatarsenatis SF-1.</title>
        <authorList>
            <person name="Kuroda M."/>
            <person name="Yamashita M."/>
            <person name="Miwa E."/>
            <person name="Imao K."/>
            <person name="Fujimoto N."/>
            <person name="Ono H."/>
            <person name="Nagano K."/>
            <person name="Sei K."/>
            <person name="Ike M."/>
        </authorList>
    </citation>
    <scope>NUCLEOTIDE SEQUENCE [GENOMIC DNA]</scope>
    <scope>FUNCTION AS A SELENATE REDUCTASE</scope>
    <scope>SUBUNIT</scope>
    <source>
        <strain>DSM 18680 / JCM 14380 / FERM P-15431 / SF-1</strain>
    </source>
</reference>
<reference evidence="7" key="2">
    <citation type="journal article" date="2015" name="Genome Announc.">
        <title>Draft Genome Sequence of Bacillus selenatarsenatis SF-1, a Promising Agent for Bioremediation of Environments Contaminated with Selenium and Arsenic.</title>
        <authorList>
            <person name="Kuroda M."/>
            <person name="Ayano H."/>
            <person name="Sei K."/>
            <person name="Yamashita M."/>
            <person name="Ike M."/>
        </authorList>
    </citation>
    <scope>NUCLEOTIDE SEQUENCE [LARGE SCALE GENOMIC DNA]</scope>
    <source>
        <strain>DSM 18680 / JCM 14380 / FERM P-15431 / SF-1</strain>
    </source>
</reference>